<proteinExistence type="inferred from homology"/>
<evidence type="ECO:0000255" key="1">
    <source>
        <dbReference type="HAMAP-Rule" id="MF_01569"/>
    </source>
</evidence>
<feature type="chain" id="PRO_1000073589" description="Proline--tRNA ligase">
    <location>
        <begin position="1"/>
        <end position="574"/>
    </location>
</feature>
<gene>
    <name evidence="1" type="primary">proS</name>
    <name type="ordered locus">Fnod_0680</name>
</gene>
<protein>
    <recommendedName>
        <fullName evidence="1">Proline--tRNA ligase</fullName>
        <ecNumber evidence="1">6.1.1.15</ecNumber>
    </recommendedName>
    <alternativeName>
        <fullName evidence="1">Prolyl-tRNA synthetase</fullName>
        <shortName evidence="1">ProRS</shortName>
    </alternativeName>
</protein>
<accession>A7HKV2</accession>
<reference key="1">
    <citation type="submission" date="2007-07" db="EMBL/GenBank/DDBJ databases">
        <title>Complete sequence of Fervidobacterium nodosum Rt17-B1.</title>
        <authorList>
            <consortium name="US DOE Joint Genome Institute"/>
            <person name="Copeland A."/>
            <person name="Lucas S."/>
            <person name="Lapidus A."/>
            <person name="Barry K."/>
            <person name="Glavina del Rio T."/>
            <person name="Dalin E."/>
            <person name="Tice H."/>
            <person name="Pitluck S."/>
            <person name="Saunders E."/>
            <person name="Brettin T."/>
            <person name="Bruce D."/>
            <person name="Detter J.C."/>
            <person name="Han C."/>
            <person name="Schmutz J."/>
            <person name="Larimer F."/>
            <person name="Land M."/>
            <person name="Hauser L."/>
            <person name="Kyrpides N."/>
            <person name="Mikhailova N."/>
            <person name="Nelson K."/>
            <person name="Gogarten J.P."/>
            <person name="Noll K."/>
            <person name="Richardson P."/>
        </authorList>
    </citation>
    <scope>NUCLEOTIDE SEQUENCE [LARGE SCALE GENOMIC DNA]</scope>
    <source>
        <strain>ATCC 35602 / DSM 5306 / Rt17-B1</strain>
    </source>
</reference>
<comment type="function">
    <text evidence="1">Catalyzes the attachment of proline to tRNA(Pro) in a two-step reaction: proline is first activated by ATP to form Pro-AMP and then transferred to the acceptor end of tRNA(Pro). As ProRS can inadvertently accommodate and process non-cognate amino acids such as alanine and cysteine, to avoid such errors it has two additional distinct editing activities against alanine. One activity is designated as 'pretransfer' editing and involves the tRNA(Pro)-independent hydrolysis of activated Ala-AMP. The other activity is designated 'posttransfer' editing and involves deacylation of mischarged Ala-tRNA(Pro). The misacylated Cys-tRNA(Pro) is not edited by ProRS.</text>
</comment>
<comment type="catalytic activity">
    <reaction evidence="1">
        <text>tRNA(Pro) + L-proline + ATP = L-prolyl-tRNA(Pro) + AMP + diphosphate</text>
        <dbReference type="Rhea" id="RHEA:14305"/>
        <dbReference type="Rhea" id="RHEA-COMP:9700"/>
        <dbReference type="Rhea" id="RHEA-COMP:9702"/>
        <dbReference type="ChEBI" id="CHEBI:30616"/>
        <dbReference type="ChEBI" id="CHEBI:33019"/>
        <dbReference type="ChEBI" id="CHEBI:60039"/>
        <dbReference type="ChEBI" id="CHEBI:78442"/>
        <dbReference type="ChEBI" id="CHEBI:78532"/>
        <dbReference type="ChEBI" id="CHEBI:456215"/>
        <dbReference type="EC" id="6.1.1.15"/>
    </reaction>
</comment>
<comment type="subunit">
    <text evidence="1">Homodimer.</text>
</comment>
<comment type="subcellular location">
    <subcellularLocation>
        <location evidence="1">Cytoplasm</location>
    </subcellularLocation>
</comment>
<comment type="domain">
    <text evidence="1">Consists of three domains: the N-terminal catalytic domain, the editing domain and the C-terminal anticodon-binding domain.</text>
</comment>
<comment type="similarity">
    <text evidence="1">Belongs to the class-II aminoacyl-tRNA synthetase family. ProS type 1 subfamily.</text>
</comment>
<sequence length="574" mass="65050">MRFSQFYAPTLKEAPADAEVPSQELLTRAGFIRKIAAGVYTYLPLGRRVLLKIEKIVREEMDNIGANEILMPIIQPAELWKQSGRWEDYGPEMMKLKDRHGRDFTLGPTHEELVTFLVQNELNSYKQLPITLYQMANKYRDEIRPRFGVLRAREFIMKDGYSFHSDWESLDETYKAHRKAYSNIMERIGLKYAVVEASSGAIGGNESHEFVAFADTGESNVLFCECGYAGNDERVPYTGEIIYDNEELKGMEKVYTPNVKTAQDVADFLGVPVRKIVKTLIYKGRNGYFMALVPGDRELNEEKLKNFLNDQSLAFATPDDILKDFGVPIGFLGPVGVKGIKVIADHLVKGMKNFVVGGMEKDYHFVNVNVDRDFKVDELADLIVTREGDPCPVCGKPLNAKKGIELGHIFKLGTKYSEAMGSKYMDKDGQLKPFIMGCYGWGVSRTLGAIVEQLHDEKGIIWPLSVAPFAVVITPVSNNENLMKFSEELYNFLVEKGEEVLLDDRNISPGMKFNDADLIGIPFRVTVGKALSEGMVEIKWRTGQQFKVKATLEEIYEFLQKSKQEYDPHKRVEK</sequence>
<organism>
    <name type="scientific">Fervidobacterium nodosum (strain ATCC 35602 / DSM 5306 / Rt17-B1)</name>
    <dbReference type="NCBI Taxonomy" id="381764"/>
    <lineage>
        <taxon>Bacteria</taxon>
        <taxon>Thermotogati</taxon>
        <taxon>Thermotogota</taxon>
        <taxon>Thermotogae</taxon>
        <taxon>Thermotogales</taxon>
        <taxon>Fervidobacteriaceae</taxon>
        <taxon>Fervidobacterium</taxon>
    </lineage>
</organism>
<name>SYP_FERNB</name>
<dbReference type="EC" id="6.1.1.15" evidence="1"/>
<dbReference type="EMBL" id="CP000771">
    <property type="protein sequence ID" value="ABS60535.1"/>
    <property type="molecule type" value="Genomic_DNA"/>
</dbReference>
<dbReference type="RefSeq" id="WP_011993854.1">
    <property type="nucleotide sequence ID" value="NC_009718.1"/>
</dbReference>
<dbReference type="SMR" id="A7HKV2"/>
<dbReference type="STRING" id="381764.Fnod_0680"/>
<dbReference type="KEGG" id="fno:Fnod_0680"/>
<dbReference type="eggNOG" id="COG0442">
    <property type="taxonomic scope" value="Bacteria"/>
</dbReference>
<dbReference type="HOGENOM" id="CLU_016739_0_0_0"/>
<dbReference type="OrthoDB" id="9809052at2"/>
<dbReference type="Proteomes" id="UP000002415">
    <property type="component" value="Chromosome"/>
</dbReference>
<dbReference type="GO" id="GO:0005829">
    <property type="term" value="C:cytosol"/>
    <property type="evidence" value="ECO:0007669"/>
    <property type="project" value="TreeGrafter"/>
</dbReference>
<dbReference type="GO" id="GO:0002161">
    <property type="term" value="F:aminoacyl-tRNA deacylase activity"/>
    <property type="evidence" value="ECO:0007669"/>
    <property type="project" value="InterPro"/>
</dbReference>
<dbReference type="GO" id="GO:0005524">
    <property type="term" value="F:ATP binding"/>
    <property type="evidence" value="ECO:0007669"/>
    <property type="project" value="UniProtKB-UniRule"/>
</dbReference>
<dbReference type="GO" id="GO:0004827">
    <property type="term" value="F:proline-tRNA ligase activity"/>
    <property type="evidence" value="ECO:0007669"/>
    <property type="project" value="UniProtKB-UniRule"/>
</dbReference>
<dbReference type="GO" id="GO:0006433">
    <property type="term" value="P:prolyl-tRNA aminoacylation"/>
    <property type="evidence" value="ECO:0007669"/>
    <property type="project" value="UniProtKB-UniRule"/>
</dbReference>
<dbReference type="CDD" id="cd04334">
    <property type="entry name" value="ProRS-INS"/>
    <property type="match status" value="1"/>
</dbReference>
<dbReference type="CDD" id="cd00861">
    <property type="entry name" value="ProRS_anticodon_short"/>
    <property type="match status" value="1"/>
</dbReference>
<dbReference type="CDD" id="cd00779">
    <property type="entry name" value="ProRS_core_prok"/>
    <property type="match status" value="1"/>
</dbReference>
<dbReference type="FunFam" id="3.30.930.10:FF:000065">
    <property type="entry name" value="Proline--tRNA ligase"/>
    <property type="match status" value="1"/>
</dbReference>
<dbReference type="FunFam" id="3.30.930.10:FF:000066">
    <property type="entry name" value="Proline--tRNA ligase"/>
    <property type="match status" value="1"/>
</dbReference>
<dbReference type="Gene3D" id="3.40.50.800">
    <property type="entry name" value="Anticodon-binding domain"/>
    <property type="match status" value="1"/>
</dbReference>
<dbReference type="Gene3D" id="3.30.930.10">
    <property type="entry name" value="Bira Bifunctional Protein, Domain 2"/>
    <property type="match status" value="2"/>
</dbReference>
<dbReference type="Gene3D" id="3.90.960.10">
    <property type="entry name" value="YbaK/aminoacyl-tRNA synthetase-associated domain"/>
    <property type="match status" value="1"/>
</dbReference>
<dbReference type="HAMAP" id="MF_01569">
    <property type="entry name" value="Pro_tRNA_synth_type1"/>
    <property type="match status" value="1"/>
</dbReference>
<dbReference type="InterPro" id="IPR002314">
    <property type="entry name" value="aa-tRNA-synt_IIb"/>
</dbReference>
<dbReference type="InterPro" id="IPR006195">
    <property type="entry name" value="aa-tRNA-synth_II"/>
</dbReference>
<dbReference type="InterPro" id="IPR045864">
    <property type="entry name" value="aa-tRNA-synth_II/BPL/LPL"/>
</dbReference>
<dbReference type="InterPro" id="IPR004154">
    <property type="entry name" value="Anticodon-bd"/>
</dbReference>
<dbReference type="InterPro" id="IPR036621">
    <property type="entry name" value="Anticodon-bd_dom_sf"/>
</dbReference>
<dbReference type="InterPro" id="IPR002316">
    <property type="entry name" value="Pro-tRNA-ligase_IIa"/>
</dbReference>
<dbReference type="InterPro" id="IPR004500">
    <property type="entry name" value="Pro-tRNA-synth_IIa_bac-type"/>
</dbReference>
<dbReference type="InterPro" id="IPR023717">
    <property type="entry name" value="Pro-tRNA-Synthase_IIa_type1"/>
</dbReference>
<dbReference type="InterPro" id="IPR050062">
    <property type="entry name" value="Pro-tRNA_synthetase"/>
</dbReference>
<dbReference type="InterPro" id="IPR044140">
    <property type="entry name" value="ProRS_anticodon_short"/>
</dbReference>
<dbReference type="InterPro" id="IPR033730">
    <property type="entry name" value="ProRS_core_prok"/>
</dbReference>
<dbReference type="InterPro" id="IPR036754">
    <property type="entry name" value="YbaK/aa-tRNA-synt-asso_dom_sf"/>
</dbReference>
<dbReference type="InterPro" id="IPR007214">
    <property type="entry name" value="YbaK/aa-tRNA-synth-assoc-dom"/>
</dbReference>
<dbReference type="NCBIfam" id="NF006625">
    <property type="entry name" value="PRK09194.1"/>
    <property type="match status" value="1"/>
</dbReference>
<dbReference type="NCBIfam" id="TIGR00409">
    <property type="entry name" value="proS_fam_II"/>
    <property type="match status" value="1"/>
</dbReference>
<dbReference type="PANTHER" id="PTHR42753">
    <property type="entry name" value="MITOCHONDRIAL RIBOSOME PROTEIN L39/PROLYL-TRNA LIGASE FAMILY MEMBER"/>
    <property type="match status" value="1"/>
</dbReference>
<dbReference type="PANTHER" id="PTHR42753:SF2">
    <property type="entry name" value="PROLINE--TRNA LIGASE"/>
    <property type="match status" value="1"/>
</dbReference>
<dbReference type="Pfam" id="PF03129">
    <property type="entry name" value="HGTP_anticodon"/>
    <property type="match status" value="1"/>
</dbReference>
<dbReference type="Pfam" id="PF00587">
    <property type="entry name" value="tRNA-synt_2b"/>
    <property type="match status" value="1"/>
</dbReference>
<dbReference type="Pfam" id="PF04073">
    <property type="entry name" value="tRNA_edit"/>
    <property type="match status" value="1"/>
</dbReference>
<dbReference type="PRINTS" id="PR01046">
    <property type="entry name" value="TRNASYNTHPRO"/>
</dbReference>
<dbReference type="SUPFAM" id="SSF52954">
    <property type="entry name" value="Class II aaRS ABD-related"/>
    <property type="match status" value="1"/>
</dbReference>
<dbReference type="SUPFAM" id="SSF55681">
    <property type="entry name" value="Class II aaRS and biotin synthetases"/>
    <property type="match status" value="1"/>
</dbReference>
<dbReference type="SUPFAM" id="SSF55826">
    <property type="entry name" value="YbaK/ProRS associated domain"/>
    <property type="match status" value="1"/>
</dbReference>
<dbReference type="PROSITE" id="PS50862">
    <property type="entry name" value="AA_TRNA_LIGASE_II"/>
    <property type="match status" value="1"/>
</dbReference>
<keyword id="KW-0030">Aminoacyl-tRNA synthetase</keyword>
<keyword id="KW-0067">ATP-binding</keyword>
<keyword id="KW-0963">Cytoplasm</keyword>
<keyword id="KW-0436">Ligase</keyword>
<keyword id="KW-0547">Nucleotide-binding</keyword>
<keyword id="KW-0648">Protein biosynthesis</keyword>
<keyword id="KW-1185">Reference proteome</keyword>